<proteinExistence type="inferred from homology"/>
<evidence type="ECO:0000250" key="1"/>
<evidence type="ECO:0000305" key="2"/>
<keyword id="KW-0150">Chloroplast</keyword>
<keyword id="KW-0934">Plastid</keyword>
<keyword id="KW-0687">Ribonucleoprotein</keyword>
<keyword id="KW-0689">Ribosomal protein</keyword>
<keyword id="KW-0694">RNA-binding</keyword>
<keyword id="KW-0699">rRNA-binding</keyword>
<feature type="chain" id="PRO_0000129983" description="Small ribosomal subunit protein uS19c">
    <location>
        <begin position="1"/>
        <end position="92"/>
    </location>
</feature>
<protein>
    <recommendedName>
        <fullName evidence="2">Small ribosomal subunit protein uS19c</fullName>
    </recommendedName>
    <alternativeName>
        <fullName>30S ribosomal protein S19, chloroplastic</fullName>
    </alternativeName>
</protein>
<organism>
    <name type="scientific">Picea abies</name>
    <name type="common">Norway spruce</name>
    <name type="synonym">Picea excelsa</name>
    <dbReference type="NCBI Taxonomy" id="3329"/>
    <lineage>
        <taxon>Eukaryota</taxon>
        <taxon>Viridiplantae</taxon>
        <taxon>Streptophyta</taxon>
        <taxon>Embryophyta</taxon>
        <taxon>Tracheophyta</taxon>
        <taxon>Spermatophyta</taxon>
        <taxon>Pinopsida</taxon>
        <taxon>Pinidae</taxon>
        <taxon>Conifers I</taxon>
        <taxon>Pinales</taxon>
        <taxon>Pinaceae</taxon>
        <taxon>Picea</taxon>
    </lineage>
</organism>
<name>RR19_PICAB</name>
<comment type="function">
    <text evidence="1">Protein S19 forms a complex with S13 that binds strongly to the 16S ribosomal RNA.</text>
</comment>
<comment type="subcellular location">
    <subcellularLocation>
        <location>Plastid</location>
        <location>Chloroplast</location>
    </subcellularLocation>
</comment>
<comment type="similarity">
    <text evidence="2">Belongs to the universal ribosomal protein uS19 family.</text>
</comment>
<dbReference type="EMBL" id="U92462">
    <property type="protein sequence ID" value="AAC95499.1"/>
    <property type="molecule type" value="Genomic_DNA"/>
</dbReference>
<dbReference type="PIR" id="T11809">
    <property type="entry name" value="T11809"/>
</dbReference>
<dbReference type="RefSeq" id="YP_008082850.1">
    <property type="nucleotide sequence ID" value="NC_021456.1"/>
</dbReference>
<dbReference type="SMR" id="O62953"/>
<dbReference type="GeneID" id="16185510"/>
<dbReference type="GO" id="GO:0009507">
    <property type="term" value="C:chloroplast"/>
    <property type="evidence" value="ECO:0007669"/>
    <property type="project" value="UniProtKB-SubCell"/>
</dbReference>
<dbReference type="GO" id="GO:0005763">
    <property type="term" value="C:mitochondrial small ribosomal subunit"/>
    <property type="evidence" value="ECO:0007669"/>
    <property type="project" value="TreeGrafter"/>
</dbReference>
<dbReference type="GO" id="GO:0019843">
    <property type="term" value="F:rRNA binding"/>
    <property type="evidence" value="ECO:0007669"/>
    <property type="project" value="UniProtKB-UniRule"/>
</dbReference>
<dbReference type="GO" id="GO:0003735">
    <property type="term" value="F:structural constituent of ribosome"/>
    <property type="evidence" value="ECO:0007669"/>
    <property type="project" value="InterPro"/>
</dbReference>
<dbReference type="GO" id="GO:0000028">
    <property type="term" value="P:ribosomal small subunit assembly"/>
    <property type="evidence" value="ECO:0007669"/>
    <property type="project" value="TreeGrafter"/>
</dbReference>
<dbReference type="GO" id="GO:0006412">
    <property type="term" value="P:translation"/>
    <property type="evidence" value="ECO:0007669"/>
    <property type="project" value="UniProtKB-UniRule"/>
</dbReference>
<dbReference type="FunFam" id="3.30.860.10:FF:000001">
    <property type="entry name" value="30S ribosomal protein S19"/>
    <property type="match status" value="1"/>
</dbReference>
<dbReference type="Gene3D" id="3.30.860.10">
    <property type="entry name" value="30s Ribosomal Protein S19, Chain A"/>
    <property type="match status" value="1"/>
</dbReference>
<dbReference type="HAMAP" id="MF_00531">
    <property type="entry name" value="Ribosomal_uS19"/>
    <property type="match status" value="1"/>
</dbReference>
<dbReference type="InterPro" id="IPR002222">
    <property type="entry name" value="Ribosomal_uS19"/>
</dbReference>
<dbReference type="InterPro" id="IPR005732">
    <property type="entry name" value="Ribosomal_uS19_bac-type"/>
</dbReference>
<dbReference type="InterPro" id="IPR020934">
    <property type="entry name" value="Ribosomal_uS19_CS"/>
</dbReference>
<dbReference type="InterPro" id="IPR023575">
    <property type="entry name" value="Ribosomal_uS19_SF"/>
</dbReference>
<dbReference type="NCBIfam" id="TIGR01050">
    <property type="entry name" value="rpsS_bact"/>
    <property type="match status" value="1"/>
</dbReference>
<dbReference type="PANTHER" id="PTHR11880">
    <property type="entry name" value="RIBOSOMAL PROTEIN S19P FAMILY MEMBER"/>
    <property type="match status" value="1"/>
</dbReference>
<dbReference type="PANTHER" id="PTHR11880:SF8">
    <property type="entry name" value="SMALL RIBOSOMAL SUBUNIT PROTEIN US19M"/>
    <property type="match status" value="1"/>
</dbReference>
<dbReference type="Pfam" id="PF00203">
    <property type="entry name" value="Ribosomal_S19"/>
    <property type="match status" value="1"/>
</dbReference>
<dbReference type="PIRSF" id="PIRSF002144">
    <property type="entry name" value="Ribosomal_S19"/>
    <property type="match status" value="1"/>
</dbReference>
<dbReference type="PRINTS" id="PR00975">
    <property type="entry name" value="RIBOSOMALS19"/>
</dbReference>
<dbReference type="SUPFAM" id="SSF54570">
    <property type="entry name" value="Ribosomal protein S19"/>
    <property type="match status" value="1"/>
</dbReference>
<dbReference type="PROSITE" id="PS00323">
    <property type="entry name" value="RIBOSOMAL_S19"/>
    <property type="match status" value="1"/>
</dbReference>
<accession>O62953</accession>
<geneLocation type="chloroplast"/>
<sequence length="92" mass="10576">MARSLKKNPFVANHSLRKIQNLNIKEEKKIIVTWSRASVIVPAMIGHTIAVHNGREHLPIYVTDRMVDHKLGEFAPTLLFQGHARNDKKSRR</sequence>
<gene>
    <name type="primary">rps19</name>
</gene>
<reference key="1">
    <citation type="submission" date="1997-03" db="EMBL/GenBank/DDBJ databases">
        <authorList>
            <person name="Kluemper S."/>
            <person name="Kanka S."/>
            <person name="Riesner D."/>
            <person name="Etscheid M."/>
        </authorList>
    </citation>
    <scope>NUCLEOTIDE SEQUENCE [GENOMIC DNA]</scope>
</reference>